<evidence type="ECO:0000250" key="1"/>
<evidence type="ECO:0000255" key="2">
    <source>
        <dbReference type="HAMAP-Rule" id="MF_00138"/>
    </source>
</evidence>
<dbReference type="EC" id="6.3.4.13" evidence="2"/>
<dbReference type="EMBL" id="AE007317">
    <property type="protein sequence ID" value="AAK98856.1"/>
    <property type="molecule type" value="Genomic_DNA"/>
</dbReference>
<dbReference type="PIR" id="D97878">
    <property type="entry name" value="D97878"/>
</dbReference>
<dbReference type="RefSeq" id="NP_357646.1">
    <property type="nucleotide sequence ID" value="NC_003098.1"/>
</dbReference>
<dbReference type="RefSeq" id="WP_000772191.1">
    <property type="nucleotide sequence ID" value="NC_003098.1"/>
</dbReference>
<dbReference type="SMR" id="Q8DRM0"/>
<dbReference type="STRING" id="171101.spr0052"/>
<dbReference type="KEGG" id="spr:spr0052"/>
<dbReference type="PATRIC" id="fig|171101.6.peg.60"/>
<dbReference type="eggNOG" id="COG0151">
    <property type="taxonomic scope" value="Bacteria"/>
</dbReference>
<dbReference type="HOGENOM" id="CLU_027420_3_1_9"/>
<dbReference type="UniPathway" id="UPA00074">
    <property type="reaction ID" value="UER00125"/>
</dbReference>
<dbReference type="Proteomes" id="UP000000586">
    <property type="component" value="Chromosome"/>
</dbReference>
<dbReference type="GO" id="GO:0005524">
    <property type="term" value="F:ATP binding"/>
    <property type="evidence" value="ECO:0007669"/>
    <property type="project" value="UniProtKB-KW"/>
</dbReference>
<dbReference type="GO" id="GO:0046872">
    <property type="term" value="F:metal ion binding"/>
    <property type="evidence" value="ECO:0007669"/>
    <property type="project" value="UniProtKB-KW"/>
</dbReference>
<dbReference type="GO" id="GO:0004637">
    <property type="term" value="F:phosphoribosylamine-glycine ligase activity"/>
    <property type="evidence" value="ECO:0007669"/>
    <property type="project" value="UniProtKB-UniRule"/>
</dbReference>
<dbReference type="GO" id="GO:0006189">
    <property type="term" value="P:'de novo' IMP biosynthetic process"/>
    <property type="evidence" value="ECO:0007669"/>
    <property type="project" value="UniProtKB-UniRule"/>
</dbReference>
<dbReference type="GO" id="GO:0009113">
    <property type="term" value="P:purine nucleobase biosynthetic process"/>
    <property type="evidence" value="ECO:0007669"/>
    <property type="project" value="InterPro"/>
</dbReference>
<dbReference type="FunFam" id="3.30.1490.20:FF:000006">
    <property type="entry name" value="phosphoribosylamine--glycine ligase, chloroplastic-like"/>
    <property type="match status" value="1"/>
</dbReference>
<dbReference type="Gene3D" id="3.40.50.20">
    <property type="match status" value="1"/>
</dbReference>
<dbReference type="Gene3D" id="3.30.1490.20">
    <property type="entry name" value="ATP-grasp fold, A domain"/>
    <property type="match status" value="1"/>
</dbReference>
<dbReference type="Gene3D" id="3.30.470.20">
    <property type="entry name" value="ATP-grasp fold, B domain"/>
    <property type="match status" value="1"/>
</dbReference>
<dbReference type="Gene3D" id="3.90.600.10">
    <property type="entry name" value="Phosphoribosylglycinamide synthetase, C-terminal domain"/>
    <property type="match status" value="1"/>
</dbReference>
<dbReference type="HAMAP" id="MF_00138">
    <property type="entry name" value="GARS"/>
    <property type="match status" value="1"/>
</dbReference>
<dbReference type="InterPro" id="IPR011761">
    <property type="entry name" value="ATP-grasp"/>
</dbReference>
<dbReference type="InterPro" id="IPR013815">
    <property type="entry name" value="ATP_grasp_subdomain_1"/>
</dbReference>
<dbReference type="InterPro" id="IPR016185">
    <property type="entry name" value="PreATP-grasp_dom_sf"/>
</dbReference>
<dbReference type="InterPro" id="IPR020561">
    <property type="entry name" value="PRibGlycinamid_synth_ATP-grasp"/>
</dbReference>
<dbReference type="InterPro" id="IPR000115">
    <property type="entry name" value="PRibGlycinamide_synth"/>
</dbReference>
<dbReference type="InterPro" id="IPR020560">
    <property type="entry name" value="PRibGlycinamide_synth_C-dom"/>
</dbReference>
<dbReference type="InterPro" id="IPR037123">
    <property type="entry name" value="PRibGlycinamide_synth_C_sf"/>
</dbReference>
<dbReference type="InterPro" id="IPR020559">
    <property type="entry name" value="PRibGlycinamide_synth_CS"/>
</dbReference>
<dbReference type="InterPro" id="IPR020562">
    <property type="entry name" value="PRibGlycinamide_synth_N"/>
</dbReference>
<dbReference type="InterPro" id="IPR011054">
    <property type="entry name" value="Rudment_hybrid_motif"/>
</dbReference>
<dbReference type="NCBIfam" id="TIGR00877">
    <property type="entry name" value="purD"/>
    <property type="match status" value="1"/>
</dbReference>
<dbReference type="PANTHER" id="PTHR43472">
    <property type="entry name" value="PHOSPHORIBOSYLAMINE--GLYCINE LIGASE"/>
    <property type="match status" value="1"/>
</dbReference>
<dbReference type="PANTHER" id="PTHR43472:SF1">
    <property type="entry name" value="PHOSPHORIBOSYLAMINE--GLYCINE LIGASE, CHLOROPLASTIC"/>
    <property type="match status" value="1"/>
</dbReference>
<dbReference type="Pfam" id="PF01071">
    <property type="entry name" value="GARS_A"/>
    <property type="match status" value="1"/>
</dbReference>
<dbReference type="Pfam" id="PF02843">
    <property type="entry name" value="GARS_C"/>
    <property type="match status" value="1"/>
</dbReference>
<dbReference type="Pfam" id="PF02844">
    <property type="entry name" value="GARS_N"/>
    <property type="match status" value="1"/>
</dbReference>
<dbReference type="SMART" id="SM01209">
    <property type="entry name" value="GARS_A"/>
    <property type="match status" value="1"/>
</dbReference>
<dbReference type="SMART" id="SM01210">
    <property type="entry name" value="GARS_C"/>
    <property type="match status" value="1"/>
</dbReference>
<dbReference type="SUPFAM" id="SSF56059">
    <property type="entry name" value="Glutathione synthetase ATP-binding domain-like"/>
    <property type="match status" value="1"/>
</dbReference>
<dbReference type="SUPFAM" id="SSF52440">
    <property type="entry name" value="PreATP-grasp domain"/>
    <property type="match status" value="1"/>
</dbReference>
<dbReference type="SUPFAM" id="SSF51246">
    <property type="entry name" value="Rudiment single hybrid motif"/>
    <property type="match status" value="1"/>
</dbReference>
<dbReference type="PROSITE" id="PS50975">
    <property type="entry name" value="ATP_GRASP"/>
    <property type="match status" value="1"/>
</dbReference>
<dbReference type="PROSITE" id="PS00184">
    <property type="entry name" value="GARS"/>
    <property type="match status" value="1"/>
</dbReference>
<keyword id="KW-0067">ATP-binding</keyword>
<keyword id="KW-0436">Ligase</keyword>
<keyword id="KW-0460">Magnesium</keyword>
<keyword id="KW-0464">Manganese</keyword>
<keyword id="KW-0479">Metal-binding</keyword>
<keyword id="KW-0547">Nucleotide-binding</keyword>
<keyword id="KW-0658">Purine biosynthesis</keyword>
<keyword id="KW-1185">Reference proteome</keyword>
<gene>
    <name evidence="2" type="primary">purD</name>
    <name type="ordered locus">spr0052</name>
</gene>
<sequence>MKLLVVGSGGREHAIAKKLLESKDVEKVFVAPGNDGMTLDGLELVNISISEHSKLIDFAKTNDVAWTFIGPDDALAAGIVDDFNQAGLKAFGPTRAAAELEWSKDFAKEIMVKYGVSTAAYGTFSDFEEAKAYIEKHGAPIVVKADGLALGKGVVVAETVEQAVEAAHEMLLDNKFGDSGARVVIEEFLEGEEFSLFAFVNGDKFYIMPTAQDHKRAYDGDKGPNTGGMGAYAPVPHLPQSVVDTAVDTIVKPVLEGIIKEGRPYLGVIYAGLILTADGPKVIEFNSRFGDPETQIILPRLTSDFAQNITDILDGKEPNIMWTDKGVTLGVVVASKGYPLDYERGVELPAKTEGDVITYYAGAKFAENSRALLSNGGRVYMLVTTADTVKEAQASIYQELSQQKIEGLFYRTDIGSKAIK</sequence>
<comment type="catalytic activity">
    <reaction evidence="2">
        <text>5-phospho-beta-D-ribosylamine + glycine + ATP = N(1)-(5-phospho-beta-D-ribosyl)glycinamide + ADP + phosphate + H(+)</text>
        <dbReference type="Rhea" id="RHEA:17453"/>
        <dbReference type="ChEBI" id="CHEBI:15378"/>
        <dbReference type="ChEBI" id="CHEBI:30616"/>
        <dbReference type="ChEBI" id="CHEBI:43474"/>
        <dbReference type="ChEBI" id="CHEBI:57305"/>
        <dbReference type="ChEBI" id="CHEBI:58681"/>
        <dbReference type="ChEBI" id="CHEBI:143788"/>
        <dbReference type="ChEBI" id="CHEBI:456216"/>
        <dbReference type="EC" id="6.3.4.13"/>
    </reaction>
</comment>
<comment type="cofactor">
    <cofactor evidence="1">
        <name>Mg(2+)</name>
        <dbReference type="ChEBI" id="CHEBI:18420"/>
    </cofactor>
    <cofactor evidence="1">
        <name>Mn(2+)</name>
        <dbReference type="ChEBI" id="CHEBI:29035"/>
    </cofactor>
    <text evidence="1">Binds 1 Mg(2+) or Mn(2+) ion per subunit.</text>
</comment>
<comment type="pathway">
    <text evidence="2">Purine metabolism; IMP biosynthesis via de novo pathway; N(1)-(5-phospho-D-ribosyl)glycinamide from 5-phospho-alpha-D-ribose 1-diphosphate: step 2/2.</text>
</comment>
<comment type="similarity">
    <text evidence="2">Belongs to the GARS family.</text>
</comment>
<protein>
    <recommendedName>
        <fullName evidence="2">Phosphoribosylamine--glycine ligase</fullName>
        <ecNumber evidence="2">6.3.4.13</ecNumber>
    </recommendedName>
    <alternativeName>
        <fullName evidence="2">GARS</fullName>
    </alternativeName>
    <alternativeName>
        <fullName evidence="2">Glycinamide ribonucleotide synthetase</fullName>
    </alternativeName>
    <alternativeName>
        <fullName evidence="2">Phosphoribosylglycinamide synthetase</fullName>
    </alternativeName>
</protein>
<organism>
    <name type="scientific">Streptococcus pneumoniae (strain ATCC BAA-255 / R6)</name>
    <dbReference type="NCBI Taxonomy" id="171101"/>
    <lineage>
        <taxon>Bacteria</taxon>
        <taxon>Bacillati</taxon>
        <taxon>Bacillota</taxon>
        <taxon>Bacilli</taxon>
        <taxon>Lactobacillales</taxon>
        <taxon>Streptococcaceae</taxon>
        <taxon>Streptococcus</taxon>
    </lineage>
</organism>
<proteinExistence type="inferred from homology"/>
<name>PUR2_STRR6</name>
<accession>Q8DRM0</accession>
<feature type="chain" id="PRO_0000151488" description="Phosphoribosylamine--glycine ligase">
    <location>
        <begin position="1"/>
        <end position="420"/>
    </location>
</feature>
<feature type="domain" description="ATP-grasp" evidence="2">
    <location>
        <begin position="108"/>
        <end position="314"/>
    </location>
</feature>
<feature type="binding site" evidence="2">
    <location>
        <begin position="134"/>
        <end position="195"/>
    </location>
    <ligand>
        <name>ATP</name>
        <dbReference type="ChEBI" id="CHEBI:30616"/>
    </ligand>
</feature>
<feature type="binding site" evidence="2">
    <location>
        <position position="284"/>
    </location>
    <ligand>
        <name>Mg(2+)</name>
        <dbReference type="ChEBI" id="CHEBI:18420"/>
    </ligand>
</feature>
<feature type="binding site" evidence="2">
    <location>
        <position position="286"/>
    </location>
    <ligand>
        <name>Mg(2+)</name>
        <dbReference type="ChEBI" id="CHEBI:18420"/>
    </ligand>
</feature>
<reference key="1">
    <citation type="journal article" date="2001" name="J. Bacteriol.">
        <title>Genome of the bacterium Streptococcus pneumoniae strain R6.</title>
        <authorList>
            <person name="Hoskins J."/>
            <person name="Alborn W.E. Jr."/>
            <person name="Arnold J."/>
            <person name="Blaszczak L.C."/>
            <person name="Burgett S."/>
            <person name="DeHoff B.S."/>
            <person name="Estrem S.T."/>
            <person name="Fritz L."/>
            <person name="Fu D.-J."/>
            <person name="Fuller W."/>
            <person name="Geringer C."/>
            <person name="Gilmour R."/>
            <person name="Glass J.S."/>
            <person name="Khoja H."/>
            <person name="Kraft A.R."/>
            <person name="Lagace R.E."/>
            <person name="LeBlanc D.J."/>
            <person name="Lee L.N."/>
            <person name="Lefkowitz E.J."/>
            <person name="Lu J."/>
            <person name="Matsushima P."/>
            <person name="McAhren S.M."/>
            <person name="McHenney M."/>
            <person name="McLeaster K."/>
            <person name="Mundy C.W."/>
            <person name="Nicas T.I."/>
            <person name="Norris F.H."/>
            <person name="O'Gara M."/>
            <person name="Peery R.B."/>
            <person name="Robertson G.T."/>
            <person name="Rockey P."/>
            <person name="Sun P.-M."/>
            <person name="Winkler M.E."/>
            <person name="Yang Y."/>
            <person name="Young-Bellido M."/>
            <person name="Zhao G."/>
            <person name="Zook C.A."/>
            <person name="Baltz R.H."/>
            <person name="Jaskunas S.R."/>
            <person name="Rosteck P.R. Jr."/>
            <person name="Skatrud P.L."/>
            <person name="Glass J.I."/>
        </authorList>
    </citation>
    <scope>NUCLEOTIDE SEQUENCE [LARGE SCALE GENOMIC DNA]</scope>
    <source>
        <strain>ATCC BAA-255 / R6</strain>
    </source>
</reference>